<keyword id="KW-0143">Chaperone</keyword>
<keyword id="KW-0963">Cytoplasm</keyword>
<keyword id="KW-0346">Stress response</keyword>
<name>GRPE_VIBVU</name>
<protein>
    <recommendedName>
        <fullName evidence="1">Protein GrpE</fullName>
    </recommendedName>
    <alternativeName>
        <fullName evidence="1">HSP-70 cofactor</fullName>
    </alternativeName>
</protein>
<evidence type="ECO:0000255" key="1">
    <source>
        <dbReference type="HAMAP-Rule" id="MF_01151"/>
    </source>
</evidence>
<evidence type="ECO:0000256" key="2">
    <source>
        <dbReference type="SAM" id="MobiDB-lite"/>
    </source>
</evidence>
<reference key="1">
    <citation type="submission" date="2002-12" db="EMBL/GenBank/DDBJ databases">
        <title>Complete genome sequence of Vibrio vulnificus CMCP6.</title>
        <authorList>
            <person name="Rhee J.H."/>
            <person name="Kim S.Y."/>
            <person name="Chung S.S."/>
            <person name="Kim J.J."/>
            <person name="Moon Y.H."/>
            <person name="Jeong H."/>
            <person name="Choy H.E."/>
        </authorList>
    </citation>
    <scope>NUCLEOTIDE SEQUENCE [LARGE SCALE GENOMIC DNA]</scope>
    <source>
        <strain>CMCP6</strain>
    </source>
</reference>
<gene>
    <name evidence="1" type="primary">grpE</name>
    <name type="ordered locus">VV1_0365</name>
</gene>
<proteinExistence type="inferred from homology"/>
<accession>Q8DF59</accession>
<comment type="function">
    <text evidence="1">Participates actively in the response to hyperosmotic and heat shock by preventing the aggregation of stress-denatured proteins, in association with DnaK and GrpE. It is the nucleotide exchange factor for DnaK and may function as a thermosensor. Unfolded proteins bind initially to DnaJ; upon interaction with the DnaJ-bound protein, DnaK hydrolyzes its bound ATP, resulting in the formation of a stable complex. GrpE releases ADP from DnaK; ATP binding to DnaK triggers the release of the substrate protein, thus completing the reaction cycle. Several rounds of ATP-dependent interactions between DnaJ, DnaK and GrpE are required for fully efficient folding.</text>
</comment>
<comment type="subunit">
    <text evidence="1">Homodimer.</text>
</comment>
<comment type="subcellular location">
    <subcellularLocation>
        <location evidence="1">Cytoplasm</location>
    </subcellularLocation>
</comment>
<comment type="similarity">
    <text evidence="1">Belongs to the GrpE family.</text>
</comment>
<feature type="chain" id="PRO_0000113895" description="Protein GrpE">
    <location>
        <begin position="1"/>
        <end position="183"/>
    </location>
</feature>
<feature type="region of interest" description="Disordered" evidence="2">
    <location>
        <begin position="1"/>
        <end position="20"/>
    </location>
</feature>
<feature type="compositionally biased region" description="Basic and acidic residues" evidence="2">
    <location>
        <begin position="1"/>
        <end position="14"/>
    </location>
</feature>
<organism>
    <name type="scientific">Vibrio vulnificus (strain CMCP6)</name>
    <dbReference type="NCBI Taxonomy" id="216895"/>
    <lineage>
        <taxon>Bacteria</taxon>
        <taxon>Pseudomonadati</taxon>
        <taxon>Pseudomonadota</taxon>
        <taxon>Gammaproteobacteria</taxon>
        <taxon>Vibrionales</taxon>
        <taxon>Vibrionaceae</taxon>
        <taxon>Vibrio</taxon>
    </lineage>
</organism>
<sequence>MSNEENKINEEALKQQDAAEVEVEAVGTDADIEWNEEADESAAKIAELEAALLASEARVKEQQDSVLRAKAEVENMRRRTEQEIDKARKYALNRFAEELLPVIDNLERAIQAADAESEAVKPLLEGVELTHKTFVDVVSKFGLKEINPEGQPFNPEWHQAMSIQESPDHESNTVMFVMQKAMN</sequence>
<dbReference type="EMBL" id="AE016795">
    <property type="protein sequence ID" value="AAO08889.1"/>
    <property type="molecule type" value="Genomic_DNA"/>
</dbReference>
<dbReference type="SMR" id="Q8DF59"/>
<dbReference type="KEGG" id="vvu:VV1_0365"/>
<dbReference type="HOGENOM" id="CLU_057217_6_0_6"/>
<dbReference type="Proteomes" id="UP000002275">
    <property type="component" value="Chromosome 1"/>
</dbReference>
<dbReference type="GO" id="GO:0005829">
    <property type="term" value="C:cytosol"/>
    <property type="evidence" value="ECO:0007669"/>
    <property type="project" value="TreeGrafter"/>
</dbReference>
<dbReference type="GO" id="GO:0000774">
    <property type="term" value="F:adenyl-nucleotide exchange factor activity"/>
    <property type="evidence" value="ECO:0007669"/>
    <property type="project" value="InterPro"/>
</dbReference>
<dbReference type="GO" id="GO:0042803">
    <property type="term" value="F:protein homodimerization activity"/>
    <property type="evidence" value="ECO:0007669"/>
    <property type="project" value="InterPro"/>
</dbReference>
<dbReference type="GO" id="GO:0051087">
    <property type="term" value="F:protein-folding chaperone binding"/>
    <property type="evidence" value="ECO:0007669"/>
    <property type="project" value="InterPro"/>
</dbReference>
<dbReference type="GO" id="GO:0051082">
    <property type="term" value="F:unfolded protein binding"/>
    <property type="evidence" value="ECO:0007669"/>
    <property type="project" value="TreeGrafter"/>
</dbReference>
<dbReference type="GO" id="GO:0006457">
    <property type="term" value="P:protein folding"/>
    <property type="evidence" value="ECO:0007669"/>
    <property type="project" value="InterPro"/>
</dbReference>
<dbReference type="CDD" id="cd00446">
    <property type="entry name" value="GrpE"/>
    <property type="match status" value="1"/>
</dbReference>
<dbReference type="Gene3D" id="3.90.20.20">
    <property type="match status" value="1"/>
</dbReference>
<dbReference type="Gene3D" id="2.30.22.10">
    <property type="entry name" value="Head domain of nucleotide exchange factor GrpE"/>
    <property type="match status" value="1"/>
</dbReference>
<dbReference type="HAMAP" id="MF_01151">
    <property type="entry name" value="GrpE"/>
    <property type="match status" value="1"/>
</dbReference>
<dbReference type="InterPro" id="IPR000740">
    <property type="entry name" value="GrpE"/>
</dbReference>
<dbReference type="InterPro" id="IPR013805">
    <property type="entry name" value="GrpE_coiled_coil"/>
</dbReference>
<dbReference type="InterPro" id="IPR009012">
    <property type="entry name" value="GrpE_head"/>
</dbReference>
<dbReference type="NCBIfam" id="NF010748">
    <property type="entry name" value="PRK14150.1"/>
    <property type="match status" value="1"/>
</dbReference>
<dbReference type="PANTHER" id="PTHR21237">
    <property type="entry name" value="GRPE PROTEIN"/>
    <property type="match status" value="1"/>
</dbReference>
<dbReference type="PANTHER" id="PTHR21237:SF23">
    <property type="entry name" value="GRPE PROTEIN HOMOLOG, MITOCHONDRIAL"/>
    <property type="match status" value="1"/>
</dbReference>
<dbReference type="Pfam" id="PF01025">
    <property type="entry name" value="GrpE"/>
    <property type="match status" value="1"/>
</dbReference>
<dbReference type="PRINTS" id="PR00773">
    <property type="entry name" value="GRPEPROTEIN"/>
</dbReference>
<dbReference type="SUPFAM" id="SSF58014">
    <property type="entry name" value="Coiled-coil domain of nucleotide exchange factor GrpE"/>
    <property type="match status" value="1"/>
</dbReference>
<dbReference type="SUPFAM" id="SSF51064">
    <property type="entry name" value="Head domain of nucleotide exchange factor GrpE"/>
    <property type="match status" value="1"/>
</dbReference>